<sequence length="217" mass="23359">MKFFVDTADVKEIRELNDLGLVDGVTTNPSLILKSGRDIIEVTKEICNIVKGPVSAEVAATEYEQMMKEAAVIARIADNICIKLPVTLDGLKACKALTSEGHKVNMTLCFSANQALLAAKAGATFISPFIGRLDDTGINGMELIAEIRTIYDNYDFRTEILAASVRTVNHVKEAALIGADVVTAPPATLKALVKHPLTDKGLETFLADWAKTGQKIA</sequence>
<feature type="chain" id="PRO_1000126284" description="Probable transaldolase">
    <location>
        <begin position="1"/>
        <end position="217"/>
    </location>
</feature>
<feature type="active site" description="Schiff-base intermediate with substrate" evidence="1">
    <location>
        <position position="83"/>
    </location>
</feature>
<reference key="1">
    <citation type="journal article" date="2008" name="PLoS ONE">
        <title>Genome sequence of Brucella abortus vaccine strain S19 compared to virulent strains yields candidate virulence genes.</title>
        <authorList>
            <person name="Crasta O.R."/>
            <person name="Folkerts O."/>
            <person name="Fei Z."/>
            <person name="Mane S.P."/>
            <person name="Evans C."/>
            <person name="Martino-Catt S."/>
            <person name="Bricker B."/>
            <person name="Yu G."/>
            <person name="Du L."/>
            <person name="Sobral B.W."/>
        </authorList>
    </citation>
    <scope>NUCLEOTIDE SEQUENCE [LARGE SCALE GENOMIC DNA]</scope>
    <source>
        <strain>S19</strain>
    </source>
</reference>
<proteinExistence type="inferred from homology"/>
<gene>
    <name evidence="1" type="primary">tal</name>
    <name type="ordered locus">BAbS19_I16940</name>
</gene>
<comment type="function">
    <text evidence="1">Transaldolase is important for the balance of metabolites in the pentose-phosphate pathway.</text>
</comment>
<comment type="catalytic activity">
    <reaction evidence="1">
        <text>D-sedoheptulose 7-phosphate + D-glyceraldehyde 3-phosphate = D-erythrose 4-phosphate + beta-D-fructose 6-phosphate</text>
        <dbReference type="Rhea" id="RHEA:17053"/>
        <dbReference type="ChEBI" id="CHEBI:16897"/>
        <dbReference type="ChEBI" id="CHEBI:57483"/>
        <dbReference type="ChEBI" id="CHEBI:57634"/>
        <dbReference type="ChEBI" id="CHEBI:59776"/>
        <dbReference type="EC" id="2.2.1.2"/>
    </reaction>
</comment>
<comment type="pathway">
    <text evidence="1">Carbohydrate degradation; pentose phosphate pathway; D-glyceraldehyde 3-phosphate and beta-D-fructose 6-phosphate from D-ribose 5-phosphate and D-xylulose 5-phosphate (non-oxidative stage): step 2/3.</text>
</comment>
<comment type="subcellular location">
    <subcellularLocation>
        <location evidence="1">Cytoplasm</location>
    </subcellularLocation>
</comment>
<comment type="similarity">
    <text evidence="1">Belongs to the transaldolase family. Type 3B subfamily.</text>
</comment>
<organism>
    <name type="scientific">Brucella abortus (strain S19)</name>
    <dbReference type="NCBI Taxonomy" id="430066"/>
    <lineage>
        <taxon>Bacteria</taxon>
        <taxon>Pseudomonadati</taxon>
        <taxon>Pseudomonadota</taxon>
        <taxon>Alphaproteobacteria</taxon>
        <taxon>Hyphomicrobiales</taxon>
        <taxon>Brucellaceae</taxon>
        <taxon>Brucella/Ochrobactrum group</taxon>
        <taxon>Brucella</taxon>
    </lineage>
</organism>
<keyword id="KW-0963">Cytoplasm</keyword>
<keyword id="KW-0570">Pentose shunt</keyword>
<keyword id="KW-0704">Schiff base</keyword>
<keyword id="KW-0808">Transferase</keyword>
<accession>B2S7M9</accession>
<evidence type="ECO:0000255" key="1">
    <source>
        <dbReference type="HAMAP-Rule" id="MF_00494"/>
    </source>
</evidence>
<dbReference type="EC" id="2.2.1.2" evidence="1"/>
<dbReference type="EMBL" id="CP000887">
    <property type="protein sequence ID" value="ACD73176.1"/>
    <property type="molecule type" value="Genomic_DNA"/>
</dbReference>
<dbReference type="SMR" id="B2S7M9"/>
<dbReference type="KEGG" id="bmc:BAbS19_I16940"/>
<dbReference type="HOGENOM" id="CLU_079764_0_0_5"/>
<dbReference type="UniPathway" id="UPA00115">
    <property type="reaction ID" value="UER00414"/>
</dbReference>
<dbReference type="Proteomes" id="UP000002565">
    <property type="component" value="Chromosome 1"/>
</dbReference>
<dbReference type="GO" id="GO:0005737">
    <property type="term" value="C:cytoplasm"/>
    <property type="evidence" value="ECO:0007669"/>
    <property type="project" value="UniProtKB-SubCell"/>
</dbReference>
<dbReference type="GO" id="GO:0016832">
    <property type="term" value="F:aldehyde-lyase activity"/>
    <property type="evidence" value="ECO:0007669"/>
    <property type="project" value="InterPro"/>
</dbReference>
<dbReference type="GO" id="GO:0004801">
    <property type="term" value="F:transaldolase activity"/>
    <property type="evidence" value="ECO:0007669"/>
    <property type="project" value="UniProtKB-UniRule"/>
</dbReference>
<dbReference type="GO" id="GO:0005975">
    <property type="term" value="P:carbohydrate metabolic process"/>
    <property type="evidence" value="ECO:0007669"/>
    <property type="project" value="InterPro"/>
</dbReference>
<dbReference type="GO" id="GO:0006098">
    <property type="term" value="P:pentose-phosphate shunt"/>
    <property type="evidence" value="ECO:0007669"/>
    <property type="project" value="UniProtKB-UniRule"/>
</dbReference>
<dbReference type="CDD" id="cd00956">
    <property type="entry name" value="Transaldolase_FSA"/>
    <property type="match status" value="1"/>
</dbReference>
<dbReference type="FunFam" id="3.20.20.70:FF:000018">
    <property type="entry name" value="Probable transaldolase"/>
    <property type="match status" value="1"/>
</dbReference>
<dbReference type="Gene3D" id="3.20.20.70">
    <property type="entry name" value="Aldolase class I"/>
    <property type="match status" value="1"/>
</dbReference>
<dbReference type="HAMAP" id="MF_00494">
    <property type="entry name" value="Transaldolase_3b"/>
    <property type="match status" value="1"/>
</dbReference>
<dbReference type="InterPro" id="IPR013785">
    <property type="entry name" value="Aldolase_TIM"/>
</dbReference>
<dbReference type="InterPro" id="IPR001585">
    <property type="entry name" value="TAL/FSA"/>
</dbReference>
<dbReference type="InterPro" id="IPR022999">
    <property type="entry name" value="Transaldolase_3B"/>
</dbReference>
<dbReference type="InterPro" id="IPR004731">
    <property type="entry name" value="Transaldolase_3B/F6P_aldolase"/>
</dbReference>
<dbReference type="InterPro" id="IPR018225">
    <property type="entry name" value="Transaldolase_AS"/>
</dbReference>
<dbReference type="InterPro" id="IPR033919">
    <property type="entry name" value="TSA/FSA_arc/bac"/>
</dbReference>
<dbReference type="NCBIfam" id="TIGR00875">
    <property type="entry name" value="fsa_talC_mipB"/>
    <property type="match status" value="1"/>
</dbReference>
<dbReference type="PANTHER" id="PTHR10683:SF40">
    <property type="entry name" value="FRUCTOSE-6-PHOSPHATE ALDOLASE 1-RELATED"/>
    <property type="match status" value="1"/>
</dbReference>
<dbReference type="PANTHER" id="PTHR10683">
    <property type="entry name" value="TRANSALDOLASE"/>
    <property type="match status" value="1"/>
</dbReference>
<dbReference type="Pfam" id="PF00923">
    <property type="entry name" value="TAL_FSA"/>
    <property type="match status" value="1"/>
</dbReference>
<dbReference type="SUPFAM" id="SSF51569">
    <property type="entry name" value="Aldolase"/>
    <property type="match status" value="1"/>
</dbReference>
<dbReference type="PROSITE" id="PS01054">
    <property type="entry name" value="TRANSALDOLASE_1"/>
    <property type="match status" value="1"/>
</dbReference>
<dbReference type="PROSITE" id="PS00958">
    <property type="entry name" value="TRANSALDOLASE_2"/>
    <property type="match status" value="1"/>
</dbReference>
<name>TAL_BRUA1</name>
<protein>
    <recommendedName>
        <fullName evidence="1">Probable transaldolase</fullName>
        <ecNumber evidence="1">2.2.1.2</ecNumber>
    </recommendedName>
</protein>